<gene>
    <name evidence="1" type="primary">pepT</name>
    <name type="ordered locus">SMU_691</name>
</gene>
<proteinExistence type="inferred from homology"/>
<feature type="chain" id="PRO_0000185319" description="Peptidase T">
    <location>
        <begin position="1"/>
        <end position="406"/>
    </location>
</feature>
<feature type="active site" evidence="1">
    <location>
        <position position="82"/>
    </location>
</feature>
<feature type="active site" description="Proton acceptor" evidence="1">
    <location>
        <position position="175"/>
    </location>
</feature>
<feature type="binding site" evidence="1">
    <location>
        <position position="80"/>
    </location>
    <ligand>
        <name>Zn(2+)</name>
        <dbReference type="ChEBI" id="CHEBI:29105"/>
        <label>1</label>
    </ligand>
</feature>
<feature type="binding site" evidence="1">
    <location>
        <position position="141"/>
    </location>
    <ligand>
        <name>Zn(2+)</name>
        <dbReference type="ChEBI" id="CHEBI:29105"/>
        <label>1</label>
    </ligand>
</feature>
<feature type="binding site" evidence="1">
    <location>
        <position position="141"/>
    </location>
    <ligand>
        <name>Zn(2+)</name>
        <dbReference type="ChEBI" id="CHEBI:29105"/>
        <label>2</label>
    </ligand>
</feature>
<feature type="binding site" evidence="1">
    <location>
        <position position="176"/>
    </location>
    <ligand>
        <name>Zn(2+)</name>
        <dbReference type="ChEBI" id="CHEBI:29105"/>
        <label>2</label>
    </ligand>
</feature>
<feature type="binding site" evidence="1">
    <location>
        <position position="198"/>
    </location>
    <ligand>
        <name>Zn(2+)</name>
        <dbReference type="ChEBI" id="CHEBI:29105"/>
        <label>1</label>
    </ligand>
</feature>
<feature type="binding site" evidence="1">
    <location>
        <position position="380"/>
    </location>
    <ligand>
        <name>Zn(2+)</name>
        <dbReference type="ChEBI" id="CHEBI:29105"/>
        <label>2</label>
    </ligand>
</feature>
<keyword id="KW-0031">Aminopeptidase</keyword>
<keyword id="KW-0963">Cytoplasm</keyword>
<keyword id="KW-0378">Hydrolase</keyword>
<keyword id="KW-0479">Metal-binding</keyword>
<keyword id="KW-0482">Metalloprotease</keyword>
<keyword id="KW-0645">Protease</keyword>
<keyword id="KW-1185">Reference proteome</keyword>
<keyword id="KW-0862">Zinc</keyword>
<dbReference type="EC" id="3.4.11.4" evidence="1"/>
<dbReference type="EMBL" id="AE014133">
    <property type="protein sequence ID" value="AAN58424.1"/>
    <property type="molecule type" value="Genomic_DNA"/>
</dbReference>
<dbReference type="RefSeq" id="NP_721118.1">
    <property type="nucleotide sequence ID" value="NC_004350.2"/>
</dbReference>
<dbReference type="RefSeq" id="WP_002263333.1">
    <property type="nucleotide sequence ID" value="NC_004350.2"/>
</dbReference>
<dbReference type="SMR" id="Q8CWX9"/>
<dbReference type="STRING" id="210007.SMU_691"/>
<dbReference type="MEROPS" id="M20.003"/>
<dbReference type="KEGG" id="smu:SMU_691"/>
<dbReference type="PATRIC" id="fig|210007.7.peg.614"/>
<dbReference type="eggNOG" id="COG2195">
    <property type="taxonomic scope" value="Bacteria"/>
</dbReference>
<dbReference type="HOGENOM" id="CLU_053676_0_0_9"/>
<dbReference type="OrthoDB" id="9804934at2"/>
<dbReference type="PhylomeDB" id="Q8CWX9"/>
<dbReference type="Proteomes" id="UP000002512">
    <property type="component" value="Chromosome"/>
</dbReference>
<dbReference type="GO" id="GO:0005829">
    <property type="term" value="C:cytosol"/>
    <property type="evidence" value="ECO:0007669"/>
    <property type="project" value="TreeGrafter"/>
</dbReference>
<dbReference type="GO" id="GO:0008237">
    <property type="term" value="F:metallopeptidase activity"/>
    <property type="evidence" value="ECO:0007669"/>
    <property type="project" value="UniProtKB-KW"/>
</dbReference>
<dbReference type="GO" id="GO:0045148">
    <property type="term" value="F:tripeptide aminopeptidase activity"/>
    <property type="evidence" value="ECO:0007669"/>
    <property type="project" value="UniProtKB-UniRule"/>
</dbReference>
<dbReference type="GO" id="GO:0008270">
    <property type="term" value="F:zinc ion binding"/>
    <property type="evidence" value="ECO:0007669"/>
    <property type="project" value="UniProtKB-UniRule"/>
</dbReference>
<dbReference type="GO" id="GO:0043171">
    <property type="term" value="P:peptide catabolic process"/>
    <property type="evidence" value="ECO:0007669"/>
    <property type="project" value="UniProtKB-UniRule"/>
</dbReference>
<dbReference type="GO" id="GO:0006508">
    <property type="term" value="P:proteolysis"/>
    <property type="evidence" value="ECO:0007669"/>
    <property type="project" value="UniProtKB-UniRule"/>
</dbReference>
<dbReference type="CDD" id="cd03892">
    <property type="entry name" value="M20_peptT"/>
    <property type="match status" value="1"/>
</dbReference>
<dbReference type="FunFam" id="3.30.70.360:FF:000002">
    <property type="entry name" value="Peptidase T"/>
    <property type="match status" value="1"/>
</dbReference>
<dbReference type="Gene3D" id="3.30.70.360">
    <property type="match status" value="1"/>
</dbReference>
<dbReference type="Gene3D" id="3.40.630.10">
    <property type="entry name" value="Zn peptidases"/>
    <property type="match status" value="1"/>
</dbReference>
<dbReference type="HAMAP" id="MF_00550">
    <property type="entry name" value="Aminopeptidase_M20"/>
    <property type="match status" value="1"/>
</dbReference>
<dbReference type="InterPro" id="IPR001261">
    <property type="entry name" value="ArgE/DapE_CS"/>
</dbReference>
<dbReference type="InterPro" id="IPR036264">
    <property type="entry name" value="Bact_exopeptidase_dim_dom"/>
</dbReference>
<dbReference type="InterPro" id="IPR002933">
    <property type="entry name" value="Peptidase_M20"/>
</dbReference>
<dbReference type="InterPro" id="IPR011650">
    <property type="entry name" value="Peptidase_M20_dimer"/>
</dbReference>
<dbReference type="InterPro" id="IPR010161">
    <property type="entry name" value="Peptidase_M20B"/>
</dbReference>
<dbReference type="NCBIfam" id="TIGR01882">
    <property type="entry name" value="peptidase-T"/>
    <property type="match status" value="1"/>
</dbReference>
<dbReference type="NCBIfam" id="NF003976">
    <property type="entry name" value="PRK05469.1"/>
    <property type="match status" value="1"/>
</dbReference>
<dbReference type="NCBIfam" id="NF009920">
    <property type="entry name" value="PRK13381.1"/>
    <property type="match status" value="1"/>
</dbReference>
<dbReference type="PANTHER" id="PTHR42994">
    <property type="entry name" value="PEPTIDASE T"/>
    <property type="match status" value="1"/>
</dbReference>
<dbReference type="PANTHER" id="PTHR42994:SF1">
    <property type="entry name" value="PEPTIDASE T"/>
    <property type="match status" value="1"/>
</dbReference>
<dbReference type="Pfam" id="PF07687">
    <property type="entry name" value="M20_dimer"/>
    <property type="match status" value="1"/>
</dbReference>
<dbReference type="Pfam" id="PF01546">
    <property type="entry name" value="Peptidase_M20"/>
    <property type="match status" value="1"/>
</dbReference>
<dbReference type="PIRSF" id="PIRSF037215">
    <property type="entry name" value="Peptidase_M20B"/>
    <property type="match status" value="1"/>
</dbReference>
<dbReference type="SUPFAM" id="SSF55031">
    <property type="entry name" value="Bacterial exopeptidase dimerisation domain"/>
    <property type="match status" value="1"/>
</dbReference>
<dbReference type="SUPFAM" id="SSF53187">
    <property type="entry name" value="Zn-dependent exopeptidases"/>
    <property type="match status" value="1"/>
</dbReference>
<dbReference type="PROSITE" id="PS00758">
    <property type="entry name" value="ARGE_DAPE_CPG2_1"/>
    <property type="match status" value="1"/>
</dbReference>
<dbReference type="PROSITE" id="PS00759">
    <property type="entry name" value="ARGE_DAPE_CPG2_2"/>
    <property type="match status" value="1"/>
</dbReference>
<accession>Q8CWX9</accession>
<comment type="function">
    <text evidence="1">Cleaves the N-terminal amino acid of tripeptides.</text>
</comment>
<comment type="catalytic activity">
    <reaction evidence="1">
        <text>Release of the N-terminal residue from a tripeptide.</text>
        <dbReference type="EC" id="3.4.11.4"/>
    </reaction>
</comment>
<comment type="cofactor">
    <cofactor evidence="1">
        <name>Zn(2+)</name>
        <dbReference type="ChEBI" id="CHEBI:29105"/>
    </cofactor>
    <text evidence="1">Binds 2 Zn(2+) ions per subunit.</text>
</comment>
<comment type="subcellular location">
    <subcellularLocation>
        <location evidence="1">Cytoplasm</location>
    </subcellularLocation>
</comment>
<comment type="similarity">
    <text evidence="1">Belongs to the peptidase M20B family.</text>
</comment>
<organism>
    <name type="scientific">Streptococcus mutans serotype c (strain ATCC 700610 / UA159)</name>
    <dbReference type="NCBI Taxonomy" id="210007"/>
    <lineage>
        <taxon>Bacteria</taxon>
        <taxon>Bacillati</taxon>
        <taxon>Bacillota</taxon>
        <taxon>Bacilli</taxon>
        <taxon>Lactobacillales</taxon>
        <taxon>Streptococcaceae</taxon>
        <taxon>Streptococcus</taxon>
    </lineage>
</organism>
<reference key="1">
    <citation type="journal article" date="2002" name="Proc. Natl. Acad. Sci. U.S.A.">
        <title>Genome sequence of Streptococcus mutans UA159, a cariogenic dental pathogen.</title>
        <authorList>
            <person name="Ajdic D.J."/>
            <person name="McShan W.M."/>
            <person name="McLaughlin R.E."/>
            <person name="Savic G."/>
            <person name="Chang J."/>
            <person name="Carson M.B."/>
            <person name="Primeaux C."/>
            <person name="Tian R."/>
            <person name="Kenton S."/>
            <person name="Jia H.G."/>
            <person name="Lin S.P."/>
            <person name="Qian Y."/>
            <person name="Li S."/>
            <person name="Zhu H."/>
            <person name="Najar F.Z."/>
            <person name="Lai H."/>
            <person name="White J."/>
            <person name="Roe B.A."/>
            <person name="Ferretti J.J."/>
        </authorList>
    </citation>
    <scope>NUCLEOTIDE SEQUENCE [LARGE SCALE GENOMIC DNA]</scope>
    <source>
        <strain>ATCC 700610 / UA159</strain>
    </source>
</reference>
<name>PEPT_STRMU</name>
<evidence type="ECO:0000255" key="1">
    <source>
        <dbReference type="HAMAP-Rule" id="MF_00550"/>
    </source>
</evidence>
<protein>
    <recommendedName>
        <fullName evidence="1">Peptidase T</fullName>
        <ecNumber evidence="1">3.4.11.4</ecNumber>
    </recommendedName>
    <alternativeName>
        <fullName evidence="1">Aminotripeptidase</fullName>
        <shortName evidence="1">Tripeptidase</shortName>
    </alternativeName>
    <alternativeName>
        <fullName evidence="1">Tripeptide aminopeptidase</fullName>
    </alternativeName>
</protein>
<sequence length="406" mass="45394">MTYDNLLNRFLTYTRVNTRSDESSETTPTTQSQVDFALTILKPEMKSIGLQNVHYLENGYLVGTLPANGNFPYKIGFIAHMDTADFNAEGVNPQIIDNYNGEIIQLGQTDFVLDPKEFPNLNNYLGQTLITTDGTTLLGSDDKSGIAEIMTAIDYLVKHPEIEHGEIRVGFGPDEEIGRGADQFDVEDFDVDFAYTVDGGPLGELQYETFSAAAAEIDFMGRNVHPGTAKNQMVNALQLAMDFHGQLPQEDRPEKTEGYQGFYHLLSLEGTVDAAHASYIIRDFDDEAFVSRKDFMQKIADKMNAHLGAERVQLQIYDQYYNMRKIIKKDMTCVKLAKKVMENLAIEPIIEPIRGGTDGSKISFMGLPTPNLFAGGENMHGRFEFVSLETMQRAVDVIIGIVCFKQ</sequence>